<gene>
    <name evidence="1" type="primary">nuoC1</name>
    <name type="synonym">nuoC</name>
    <name type="ordered locus">R01266</name>
    <name type="ORF">SMc01914</name>
</gene>
<feature type="chain" id="PRO_0000118674" description="NADH-quinone oxidoreductase subunit C 1">
    <location>
        <begin position="1"/>
        <end position="201"/>
    </location>
</feature>
<feature type="sequence conflict" description="In Ref. 1; AAC12756." evidence="2" ref="1">
    <original>A</original>
    <variation>G</variation>
    <location>
        <position position="15"/>
    </location>
</feature>
<feature type="sequence conflict" description="In Ref. 1; AAC12756." evidence="2" ref="1">
    <original>G</original>
    <variation>R</variation>
    <location>
        <position position="94"/>
    </location>
</feature>
<feature type="sequence conflict" description="In Ref. 2; CAB51622." evidence="2" ref="2">
    <original>D</original>
    <variation>E</variation>
    <location>
        <position position="97"/>
    </location>
</feature>
<comment type="function">
    <text evidence="1">NDH-1 shuttles electrons from NADH, via FMN and iron-sulfur (Fe-S) centers, to quinones in the respiratory chain. The immediate electron acceptor for the enzyme in this species is believed to be ubiquinone. Couples the redox reaction to proton translocation (for every two electrons transferred, four hydrogen ions are translocated across the cytoplasmic membrane), and thus conserves the redox energy in a proton gradient.</text>
</comment>
<comment type="catalytic activity">
    <reaction evidence="1">
        <text>a quinone + NADH + 5 H(+)(in) = a quinol + NAD(+) + 4 H(+)(out)</text>
        <dbReference type="Rhea" id="RHEA:57888"/>
        <dbReference type="ChEBI" id="CHEBI:15378"/>
        <dbReference type="ChEBI" id="CHEBI:24646"/>
        <dbReference type="ChEBI" id="CHEBI:57540"/>
        <dbReference type="ChEBI" id="CHEBI:57945"/>
        <dbReference type="ChEBI" id="CHEBI:132124"/>
    </reaction>
</comment>
<comment type="subunit">
    <text evidence="1">NDH-1 is composed of 14 different subunits. Subunits NuoB, C, D, E, F, and G constitute the peripheral sector of the complex.</text>
</comment>
<comment type="subcellular location">
    <subcellularLocation>
        <location evidence="1">Cell inner membrane</location>
        <topology evidence="1">Peripheral membrane protein</topology>
        <orientation evidence="1">Cytoplasmic side</orientation>
    </subcellularLocation>
</comment>
<comment type="similarity">
    <text evidence="1">Belongs to the complex I 30 kDa subunit family.</text>
</comment>
<organism>
    <name type="scientific">Rhizobium meliloti (strain 1021)</name>
    <name type="common">Ensifer meliloti</name>
    <name type="synonym">Sinorhizobium meliloti</name>
    <dbReference type="NCBI Taxonomy" id="266834"/>
    <lineage>
        <taxon>Bacteria</taxon>
        <taxon>Pseudomonadati</taxon>
        <taxon>Pseudomonadota</taxon>
        <taxon>Alphaproteobacteria</taxon>
        <taxon>Hyphomicrobiales</taxon>
        <taxon>Rhizobiaceae</taxon>
        <taxon>Sinorhizobium/Ensifer group</taxon>
        <taxon>Sinorhizobium</taxon>
    </lineage>
</organism>
<keyword id="KW-0997">Cell inner membrane</keyword>
<keyword id="KW-1003">Cell membrane</keyword>
<keyword id="KW-0472">Membrane</keyword>
<keyword id="KW-0520">NAD</keyword>
<keyword id="KW-0874">Quinone</keyword>
<keyword id="KW-1185">Reference proteome</keyword>
<keyword id="KW-1278">Translocase</keyword>
<keyword id="KW-0813">Transport</keyword>
<keyword id="KW-0830">Ubiquinone</keyword>
<dbReference type="EC" id="7.1.1.-" evidence="1"/>
<dbReference type="EMBL" id="AF055637">
    <property type="protein sequence ID" value="AAC12756.1"/>
    <property type="molecule type" value="Genomic_DNA"/>
</dbReference>
<dbReference type="EMBL" id="AJ245398">
    <property type="protein sequence ID" value="CAB51622.1"/>
    <property type="molecule type" value="Genomic_DNA"/>
</dbReference>
<dbReference type="EMBL" id="AL591688">
    <property type="protein sequence ID" value="CAC45845.1"/>
    <property type="molecule type" value="Genomic_DNA"/>
</dbReference>
<dbReference type="RefSeq" id="NP_385372.1">
    <property type="nucleotide sequence ID" value="NC_003047.1"/>
</dbReference>
<dbReference type="RefSeq" id="WP_010969144.1">
    <property type="nucleotide sequence ID" value="NC_003047.1"/>
</dbReference>
<dbReference type="SMR" id="O68854"/>
<dbReference type="EnsemblBacteria" id="CAC45845">
    <property type="protein sequence ID" value="CAC45845"/>
    <property type="gene ID" value="SMc01914"/>
</dbReference>
<dbReference type="KEGG" id="sme:SMc01914"/>
<dbReference type="PATRIC" id="fig|266834.11.peg.2680"/>
<dbReference type="eggNOG" id="COG0852">
    <property type="taxonomic scope" value="Bacteria"/>
</dbReference>
<dbReference type="HOGENOM" id="CLU_042628_2_1_5"/>
<dbReference type="OrthoDB" id="9803286at2"/>
<dbReference type="Proteomes" id="UP000001976">
    <property type="component" value="Chromosome"/>
</dbReference>
<dbReference type="GO" id="GO:0005886">
    <property type="term" value="C:plasma membrane"/>
    <property type="evidence" value="ECO:0007669"/>
    <property type="project" value="UniProtKB-SubCell"/>
</dbReference>
<dbReference type="GO" id="GO:0008137">
    <property type="term" value="F:NADH dehydrogenase (ubiquinone) activity"/>
    <property type="evidence" value="ECO:0007669"/>
    <property type="project" value="InterPro"/>
</dbReference>
<dbReference type="GO" id="GO:0050136">
    <property type="term" value="F:NADH:ubiquinone reductase (non-electrogenic) activity"/>
    <property type="evidence" value="ECO:0007669"/>
    <property type="project" value="UniProtKB-UniRule"/>
</dbReference>
<dbReference type="GO" id="GO:0048038">
    <property type="term" value="F:quinone binding"/>
    <property type="evidence" value="ECO:0007669"/>
    <property type="project" value="UniProtKB-KW"/>
</dbReference>
<dbReference type="Gene3D" id="3.30.460.80">
    <property type="entry name" value="NADH:ubiquinone oxidoreductase, 30kDa subunit"/>
    <property type="match status" value="1"/>
</dbReference>
<dbReference type="HAMAP" id="MF_01357">
    <property type="entry name" value="NDH1_NuoC"/>
    <property type="match status" value="1"/>
</dbReference>
<dbReference type="InterPro" id="IPR010218">
    <property type="entry name" value="NADH_DH_suC"/>
</dbReference>
<dbReference type="InterPro" id="IPR037232">
    <property type="entry name" value="NADH_quin_OxRdtase_su_C/D-like"/>
</dbReference>
<dbReference type="InterPro" id="IPR001268">
    <property type="entry name" value="NADH_UbQ_OxRdtase_30kDa_su"/>
</dbReference>
<dbReference type="InterPro" id="IPR020396">
    <property type="entry name" value="NADH_UbQ_OxRdtase_CS"/>
</dbReference>
<dbReference type="NCBIfam" id="TIGR01961">
    <property type="entry name" value="NuoC_fam"/>
    <property type="match status" value="1"/>
</dbReference>
<dbReference type="NCBIfam" id="NF004730">
    <property type="entry name" value="PRK06074.1-1"/>
    <property type="match status" value="1"/>
</dbReference>
<dbReference type="NCBIfam" id="NF004733">
    <property type="entry name" value="PRK06074.1-5"/>
    <property type="match status" value="1"/>
</dbReference>
<dbReference type="PANTHER" id="PTHR10884:SF14">
    <property type="entry name" value="NADH DEHYDROGENASE [UBIQUINONE] IRON-SULFUR PROTEIN 3, MITOCHONDRIAL"/>
    <property type="match status" value="1"/>
</dbReference>
<dbReference type="PANTHER" id="PTHR10884">
    <property type="entry name" value="NADH DEHYDROGENASE UBIQUINONE IRON-SULFUR PROTEIN 3"/>
    <property type="match status" value="1"/>
</dbReference>
<dbReference type="Pfam" id="PF00329">
    <property type="entry name" value="Complex1_30kDa"/>
    <property type="match status" value="1"/>
</dbReference>
<dbReference type="SUPFAM" id="SSF143243">
    <property type="entry name" value="Nqo5-like"/>
    <property type="match status" value="1"/>
</dbReference>
<dbReference type="PROSITE" id="PS00542">
    <property type="entry name" value="COMPLEX1_30K"/>
    <property type="match status" value="1"/>
</dbReference>
<proteinExistence type="inferred from homology"/>
<reference key="1">
    <citation type="submission" date="1998-03" db="EMBL/GenBank/DDBJ databases">
        <title>Sinorhizobium meliloti mutant strain SP10 which is impaired in stationary phase survival shows a reduction in the energy charge due to its defect in the energy-conserving NADH dehydrogenase.</title>
        <authorList>
            <person name="Schmidt R."/>
            <person name="Uhde C."/>
            <person name="Nagel A."/>
            <person name="Puehler A."/>
            <person name="Selbitschka W."/>
        </authorList>
    </citation>
    <scope>NUCLEOTIDE SEQUENCE [GENOMIC DNA]</scope>
    <source>
        <strain>RCR2011 / SU47</strain>
    </source>
</reference>
<reference key="2">
    <citation type="submission" date="1999-07" db="EMBL/GenBank/DDBJ databases">
        <title>Rhizobium meliloti carries two sets of nuo genes.</title>
        <authorList>
            <person name="Putnoky P."/>
            <person name="Jady B."/>
            <person name="Chellapilla K.P."/>
            <person name="Barta F."/>
            <person name="Kiss E."/>
        </authorList>
    </citation>
    <scope>NUCLEOTIDE SEQUENCE [GENOMIC DNA]</scope>
    <source>
        <strain>41</strain>
    </source>
</reference>
<reference key="3">
    <citation type="journal article" date="2001" name="Proc. Natl. Acad. Sci. U.S.A.">
        <title>Analysis of the chromosome sequence of the legume symbiont Sinorhizobium meliloti strain 1021.</title>
        <authorList>
            <person name="Capela D."/>
            <person name="Barloy-Hubler F."/>
            <person name="Gouzy J."/>
            <person name="Bothe G."/>
            <person name="Ampe F."/>
            <person name="Batut J."/>
            <person name="Boistard P."/>
            <person name="Becker A."/>
            <person name="Boutry M."/>
            <person name="Cadieu E."/>
            <person name="Dreano S."/>
            <person name="Gloux S."/>
            <person name="Godrie T."/>
            <person name="Goffeau A."/>
            <person name="Kahn D."/>
            <person name="Kiss E."/>
            <person name="Lelaure V."/>
            <person name="Masuy D."/>
            <person name="Pohl T."/>
            <person name="Portetelle D."/>
            <person name="Puehler A."/>
            <person name="Purnelle B."/>
            <person name="Ramsperger U."/>
            <person name="Renard C."/>
            <person name="Thebault P."/>
            <person name="Vandenbol M."/>
            <person name="Weidner S."/>
            <person name="Galibert F."/>
        </authorList>
    </citation>
    <scope>NUCLEOTIDE SEQUENCE [LARGE SCALE GENOMIC DNA]</scope>
    <source>
        <strain>1021</strain>
    </source>
</reference>
<reference key="4">
    <citation type="journal article" date="2001" name="Science">
        <title>The composite genome of the legume symbiont Sinorhizobium meliloti.</title>
        <authorList>
            <person name="Galibert F."/>
            <person name="Finan T.M."/>
            <person name="Long S.R."/>
            <person name="Puehler A."/>
            <person name="Abola P."/>
            <person name="Ampe F."/>
            <person name="Barloy-Hubler F."/>
            <person name="Barnett M.J."/>
            <person name="Becker A."/>
            <person name="Boistard P."/>
            <person name="Bothe G."/>
            <person name="Boutry M."/>
            <person name="Bowser L."/>
            <person name="Buhrmester J."/>
            <person name="Cadieu E."/>
            <person name="Capela D."/>
            <person name="Chain P."/>
            <person name="Cowie A."/>
            <person name="Davis R.W."/>
            <person name="Dreano S."/>
            <person name="Federspiel N.A."/>
            <person name="Fisher R.F."/>
            <person name="Gloux S."/>
            <person name="Godrie T."/>
            <person name="Goffeau A."/>
            <person name="Golding B."/>
            <person name="Gouzy J."/>
            <person name="Gurjal M."/>
            <person name="Hernandez-Lucas I."/>
            <person name="Hong A."/>
            <person name="Huizar L."/>
            <person name="Hyman R.W."/>
            <person name="Jones T."/>
            <person name="Kahn D."/>
            <person name="Kahn M.L."/>
            <person name="Kalman S."/>
            <person name="Keating D.H."/>
            <person name="Kiss E."/>
            <person name="Komp C."/>
            <person name="Lelaure V."/>
            <person name="Masuy D."/>
            <person name="Palm C."/>
            <person name="Peck M.C."/>
            <person name="Pohl T.M."/>
            <person name="Portetelle D."/>
            <person name="Purnelle B."/>
            <person name="Ramsperger U."/>
            <person name="Surzycki R."/>
            <person name="Thebault P."/>
            <person name="Vandenbol M."/>
            <person name="Vorhoelter F.J."/>
            <person name="Weidner S."/>
            <person name="Wells D.H."/>
            <person name="Wong K."/>
            <person name="Yeh K.-C."/>
            <person name="Batut J."/>
        </authorList>
    </citation>
    <scope>NUCLEOTIDE SEQUENCE [LARGE SCALE GENOMIC DNA]</scope>
    <source>
        <strain>1021</strain>
    </source>
</reference>
<accession>O68854</accession>
<sequence length="201" mass="23074">MSEALNELASYLREARGALIADAEVKYGELTVTAKAENLIALLTFLRDDVQCGFVSFIDVCGVDYPQRPDRFDVVYHLLSPRQNQRVRVKVATGENDPVPSATSVFPGADWFEREAYDMYGILFTGHPDLRRILTDYGFEGYPLRKDFPLTGFVEVRYDNEAKRVVYEPVELKQEFRNFDFLSPWEGTEYVLPGDEKARPR</sequence>
<name>NUOC1_RHIME</name>
<evidence type="ECO:0000255" key="1">
    <source>
        <dbReference type="HAMAP-Rule" id="MF_01357"/>
    </source>
</evidence>
<evidence type="ECO:0000305" key="2"/>
<protein>
    <recommendedName>
        <fullName evidence="1">NADH-quinone oxidoreductase subunit C 1</fullName>
        <ecNumber evidence="1">7.1.1.-</ecNumber>
    </recommendedName>
    <alternativeName>
        <fullName evidence="1">NADH dehydrogenase I subunit C 1</fullName>
    </alternativeName>
    <alternativeName>
        <fullName evidence="1">NDH-1 subunit C 1</fullName>
    </alternativeName>
</protein>